<name>FLIW_THESQ</name>
<proteinExistence type="inferred from homology"/>
<dbReference type="EMBL" id="CP000969">
    <property type="protein sequence ID" value="ACB09218.1"/>
    <property type="molecule type" value="Genomic_DNA"/>
</dbReference>
<dbReference type="RefSeq" id="WP_012310786.1">
    <property type="nucleotide sequence ID" value="NC_010483.1"/>
</dbReference>
<dbReference type="SMR" id="B1LA70"/>
<dbReference type="KEGG" id="trq:TRQ2_0866"/>
<dbReference type="HOGENOM" id="CLU_112356_0_2_0"/>
<dbReference type="Proteomes" id="UP000001687">
    <property type="component" value="Chromosome"/>
</dbReference>
<dbReference type="GO" id="GO:0005737">
    <property type="term" value="C:cytoplasm"/>
    <property type="evidence" value="ECO:0007669"/>
    <property type="project" value="UniProtKB-SubCell"/>
</dbReference>
<dbReference type="GO" id="GO:0044780">
    <property type="term" value="P:bacterial-type flagellum assembly"/>
    <property type="evidence" value="ECO:0007669"/>
    <property type="project" value="UniProtKB-UniRule"/>
</dbReference>
<dbReference type="GO" id="GO:0006417">
    <property type="term" value="P:regulation of translation"/>
    <property type="evidence" value="ECO:0007669"/>
    <property type="project" value="UniProtKB-KW"/>
</dbReference>
<dbReference type="Gene3D" id="2.30.290.10">
    <property type="entry name" value="BH3618-like"/>
    <property type="match status" value="1"/>
</dbReference>
<dbReference type="HAMAP" id="MF_01185">
    <property type="entry name" value="FliW"/>
    <property type="match status" value="1"/>
</dbReference>
<dbReference type="InterPro" id="IPR003775">
    <property type="entry name" value="Flagellar_assembly_factor_FliW"/>
</dbReference>
<dbReference type="InterPro" id="IPR024046">
    <property type="entry name" value="Flagellar_assmbl_FliW_dom_sf"/>
</dbReference>
<dbReference type="NCBIfam" id="NF009793">
    <property type="entry name" value="PRK13285.1-1"/>
    <property type="match status" value="1"/>
</dbReference>
<dbReference type="PANTHER" id="PTHR39190">
    <property type="entry name" value="FLAGELLAR ASSEMBLY FACTOR FLIW"/>
    <property type="match status" value="1"/>
</dbReference>
<dbReference type="PANTHER" id="PTHR39190:SF1">
    <property type="entry name" value="FLAGELLAR ASSEMBLY FACTOR FLIW"/>
    <property type="match status" value="1"/>
</dbReference>
<dbReference type="Pfam" id="PF02623">
    <property type="entry name" value="FliW"/>
    <property type="match status" value="1"/>
</dbReference>
<dbReference type="SUPFAM" id="SSF141457">
    <property type="entry name" value="BH3618-like"/>
    <property type="match status" value="1"/>
</dbReference>
<sequence length="149" mass="17070">MVYKTKLGEMEISDESIFTFEKGIPGFEHLRKFALVFPQETFPIGWLLSLEDPEVGLPVVDPKLVRADYDPVVPSEDLEEIEAENQEALLFFCVLTIPPGKPEKTTINLRAPIILNQKKKKGIQTILENEDYQLRHLLSEEMERSKTVV</sequence>
<evidence type="ECO:0000255" key="1">
    <source>
        <dbReference type="HAMAP-Rule" id="MF_01185"/>
    </source>
</evidence>
<organism>
    <name type="scientific">Thermotoga sp. (strain RQ2)</name>
    <dbReference type="NCBI Taxonomy" id="126740"/>
    <lineage>
        <taxon>Bacteria</taxon>
        <taxon>Thermotogati</taxon>
        <taxon>Thermotogota</taxon>
        <taxon>Thermotogae</taxon>
        <taxon>Thermotogales</taxon>
        <taxon>Thermotogaceae</taxon>
        <taxon>Thermotoga</taxon>
    </lineage>
</organism>
<reference key="1">
    <citation type="journal article" date="2011" name="J. Bacteriol.">
        <title>Genome sequence of Thermotoga sp. strain RQ2, a hyperthermophilic bacterium isolated from a geothermally heated region of the seafloor near Ribeira Quente, the Azores.</title>
        <authorList>
            <person name="Swithers K.S."/>
            <person name="DiPippo J.L."/>
            <person name="Bruce D.C."/>
            <person name="Detter C."/>
            <person name="Tapia R."/>
            <person name="Han S."/>
            <person name="Saunders E."/>
            <person name="Goodwin L.A."/>
            <person name="Han J."/>
            <person name="Woyke T."/>
            <person name="Pitluck S."/>
            <person name="Pennacchio L."/>
            <person name="Nolan M."/>
            <person name="Mikhailova N."/>
            <person name="Lykidis A."/>
            <person name="Land M.L."/>
            <person name="Brettin T."/>
            <person name="Stetter K.O."/>
            <person name="Nelson K.E."/>
            <person name="Gogarten J.P."/>
            <person name="Noll K.M."/>
        </authorList>
    </citation>
    <scope>NUCLEOTIDE SEQUENCE [LARGE SCALE GENOMIC DNA]</scope>
    <source>
        <strain>RQ2</strain>
    </source>
</reference>
<feature type="chain" id="PRO_1000138264" description="Flagellar assembly factor FliW">
    <location>
        <begin position="1"/>
        <end position="149"/>
    </location>
</feature>
<accession>B1LA70</accession>
<keyword id="KW-1005">Bacterial flagellum biogenesis</keyword>
<keyword id="KW-0143">Chaperone</keyword>
<keyword id="KW-0963">Cytoplasm</keyword>
<keyword id="KW-0810">Translation regulation</keyword>
<comment type="function">
    <text evidence="1">Acts as an anti-CsrA protein, binds CsrA and prevents it from repressing translation of its target genes, one of which is flagellin. Binds to flagellin and participates in the assembly of the flagellum.</text>
</comment>
<comment type="subunit">
    <text evidence="1">Interacts with translational regulator CsrA and flagellin(s).</text>
</comment>
<comment type="subcellular location">
    <subcellularLocation>
        <location evidence="1">Cytoplasm</location>
    </subcellularLocation>
</comment>
<comment type="similarity">
    <text evidence="1">Belongs to the FliW family.</text>
</comment>
<gene>
    <name evidence="1" type="primary">fliW</name>
    <name type="ordered locus">TRQ2_0866</name>
</gene>
<protein>
    <recommendedName>
        <fullName evidence="1">Flagellar assembly factor FliW</fullName>
    </recommendedName>
</protein>